<evidence type="ECO:0000250" key="1">
    <source>
        <dbReference type="UniProtKB" id="Q502W7"/>
    </source>
</evidence>
<evidence type="ECO:0000250" key="2">
    <source>
        <dbReference type="UniProtKB" id="Q8CDN8"/>
    </source>
</evidence>
<evidence type="ECO:0000255" key="3"/>
<evidence type="ECO:0000256" key="4">
    <source>
        <dbReference type="SAM" id="MobiDB-lite"/>
    </source>
</evidence>
<evidence type="ECO:0000303" key="5">
    <source ref="2"/>
</evidence>
<organism>
    <name type="scientific">Macaca fascicularis</name>
    <name type="common">Crab-eating macaque</name>
    <name type="synonym">Cynomolgus monkey</name>
    <dbReference type="NCBI Taxonomy" id="9541"/>
    <lineage>
        <taxon>Eukaryota</taxon>
        <taxon>Metazoa</taxon>
        <taxon>Chordata</taxon>
        <taxon>Craniata</taxon>
        <taxon>Vertebrata</taxon>
        <taxon>Euteleostomi</taxon>
        <taxon>Mammalia</taxon>
        <taxon>Eutheria</taxon>
        <taxon>Euarchontoglires</taxon>
        <taxon>Primates</taxon>
        <taxon>Haplorrhini</taxon>
        <taxon>Catarrhini</taxon>
        <taxon>Cercopithecidae</taxon>
        <taxon>Cercopithecinae</taxon>
        <taxon>Macaca</taxon>
    </lineage>
</organism>
<name>CCD38_MACFA</name>
<reference key="1">
    <citation type="journal article" date="2002" name="BMC Genomics">
        <title>Cynomolgus monkey testicular cDNAs for discovery of novel human genes in the human genome sequence.</title>
        <authorList>
            <person name="Osada N."/>
            <person name="Hida M."/>
            <person name="Kusuda J."/>
            <person name="Tanuma R."/>
            <person name="Hirata M."/>
            <person name="Suto Y."/>
            <person name="Hirai M."/>
            <person name="Terao K."/>
            <person name="Sugano S."/>
            <person name="Hashimoto K."/>
        </authorList>
    </citation>
    <scope>NUCLEOTIDE SEQUENCE [LARGE SCALE MRNA] (ISOFORM 1)</scope>
    <source>
        <tissue>Testis</tissue>
    </source>
</reference>
<reference key="2">
    <citation type="submission" date="2001-08" db="EMBL/GenBank/DDBJ databases">
        <title>Isolation of novel full-length cDNA clones from macaque testis cDNA libraries.</title>
        <authorList>
            <person name="Hashimoto K."/>
            <person name="Osada N."/>
            <person name="Hida M."/>
            <person name="Kusuda J."/>
            <person name="Tanuma R."/>
            <person name="Hirai M."/>
            <person name="Terao K."/>
            <person name="Sugano S."/>
        </authorList>
    </citation>
    <scope>NUCLEOTIDE SEQUENCE [LARGE SCALE MRNA] (ISOFORM 2)</scope>
    <source>
        <tissue>Testis</tissue>
    </source>
</reference>
<comment type="function">
    <text evidence="2">Essential for male fertility. Required for sperm flagellum biogenesis. Also required for acrosome biogenesis. Required for the attachment of developing acrosomes to the nucleus during spermiogenesis and may be involved in the transport of fibrous sheath components.</text>
</comment>
<comment type="subunit">
    <text evidence="2">Interacts with CCDC42, CFAP53, IFT88 and ODF2. Interacts with CCDC146. Interacts with TEKT3. Interacts with ubiquitinated histone H2A.</text>
</comment>
<comment type="subcellular location">
    <subcellularLocation>
        <location evidence="1">Cytoplasm</location>
        <location evidence="1">Cytoskeleton</location>
        <location evidence="1">Microtubule organizing center</location>
        <location evidence="1">Centrosome</location>
    </subcellularLocation>
    <subcellularLocation>
        <location evidence="2">Cytoplasm</location>
        <location evidence="2">Perinuclear region</location>
    </subcellularLocation>
    <subcellularLocation>
        <location evidence="2">Cell projection</location>
        <location evidence="2">Cilium</location>
        <location evidence="2">Flagellum</location>
    </subcellularLocation>
    <subcellularLocation>
        <location evidence="2">Cytoplasm</location>
        <location evidence="2">Cytoskeleton</location>
    </subcellularLocation>
    <text evidence="2">Localizes to the sperm flagellum, manchette and the perinuclear region of the sperm head.</text>
</comment>
<comment type="alternative products">
    <event type="alternative splicing"/>
    <isoform>
        <id>Q95JL6-1</id>
        <name>1</name>
        <sequence type="displayed"/>
    </isoform>
    <isoform>
        <id>Q95JL6-2</id>
        <name>2</name>
        <sequence type="described" ref="VSP_018329 VSP_018330"/>
    </isoform>
</comment>
<feature type="chain" id="PRO_0000234491" description="Coiled-coil domain-containing protein 38">
    <location>
        <begin position="1"/>
        <end position="563"/>
    </location>
</feature>
<feature type="region of interest" description="Disordered" evidence="4">
    <location>
        <begin position="521"/>
        <end position="550"/>
    </location>
</feature>
<feature type="coiled-coil region" evidence="3">
    <location>
        <begin position="129"/>
        <end position="212"/>
    </location>
</feature>
<feature type="coiled-coil region" evidence="3">
    <location>
        <begin position="384"/>
        <end position="415"/>
    </location>
</feature>
<feature type="coiled-coil region" evidence="3">
    <location>
        <begin position="485"/>
        <end position="522"/>
    </location>
</feature>
<feature type="compositionally biased region" description="Basic residues" evidence="4">
    <location>
        <begin position="523"/>
        <end position="533"/>
    </location>
</feature>
<feature type="splice variant" id="VSP_018329" description="In isoform 2." evidence="5">
    <original>KSN</original>
    <variation>LKR</variation>
    <location>
        <begin position="305"/>
        <end position="307"/>
    </location>
</feature>
<feature type="splice variant" id="VSP_018330" description="In isoform 2." evidence="5">
    <location>
        <begin position="398"/>
        <end position="563"/>
    </location>
</feature>
<dbReference type="EMBL" id="AB070122">
    <property type="protein sequence ID" value="BAB63067.1"/>
    <property type="molecule type" value="mRNA"/>
</dbReference>
<dbReference type="EMBL" id="AB070165">
    <property type="protein sequence ID" value="BAB63110.1"/>
    <property type="molecule type" value="mRNA"/>
</dbReference>
<dbReference type="SMR" id="Q95JL6"/>
<dbReference type="STRING" id="9541.ENSMFAP00000021748"/>
<dbReference type="eggNOG" id="ENOG502QSDI">
    <property type="taxonomic scope" value="Eukaryota"/>
</dbReference>
<dbReference type="Proteomes" id="UP000233100">
    <property type="component" value="Unplaced"/>
</dbReference>
<dbReference type="GO" id="GO:0005813">
    <property type="term" value="C:centrosome"/>
    <property type="evidence" value="ECO:0000250"/>
    <property type="project" value="UniProtKB"/>
</dbReference>
<dbReference type="GO" id="GO:0031514">
    <property type="term" value="C:motile cilium"/>
    <property type="evidence" value="ECO:0007669"/>
    <property type="project" value="UniProtKB-SubCell"/>
</dbReference>
<dbReference type="GO" id="GO:0048471">
    <property type="term" value="C:perinuclear region of cytoplasm"/>
    <property type="evidence" value="ECO:0007669"/>
    <property type="project" value="UniProtKB-SubCell"/>
</dbReference>
<dbReference type="GO" id="GO:0061649">
    <property type="term" value="F:ubiquitin-modified histone reader activity"/>
    <property type="evidence" value="ECO:0000250"/>
    <property type="project" value="UniProtKB"/>
</dbReference>
<dbReference type="GO" id="GO:0001675">
    <property type="term" value="P:acrosome assembly"/>
    <property type="evidence" value="ECO:0000250"/>
    <property type="project" value="UniProtKB"/>
</dbReference>
<dbReference type="GO" id="GO:0120316">
    <property type="term" value="P:sperm flagellum assembly"/>
    <property type="evidence" value="ECO:0000250"/>
    <property type="project" value="UniProtKB"/>
</dbReference>
<dbReference type="InterPro" id="IPR051147">
    <property type="entry name" value="CFAP_domain-containing"/>
</dbReference>
<dbReference type="InterPro" id="IPR025252">
    <property type="entry name" value="DUF4200"/>
</dbReference>
<dbReference type="PANTHER" id="PTHR21683:SF7">
    <property type="entry name" value="COILED-COIL DOMAIN-CONTAINING PROTEIN 38"/>
    <property type="match status" value="1"/>
</dbReference>
<dbReference type="PANTHER" id="PTHR21683">
    <property type="entry name" value="COILED-COIL DOMAIN-CONTAINING PROTEIN 42 LIKE-2-LIKE-RELATED"/>
    <property type="match status" value="1"/>
</dbReference>
<dbReference type="Pfam" id="PF13863">
    <property type="entry name" value="DUF4200"/>
    <property type="match status" value="1"/>
</dbReference>
<accession>Q95JL6</accession>
<accession>Q95JQ7</accession>
<sequence length="563" mass="65655">MSSNLSPTLNSGDKVKDGSIKEDRPYKIFFRDLFLFKENEMEAKKTEKLMNHNMKVYQKTTFSSRMKSRSYLSQLAFYPKRGGRSFEKFGPGPAPISRFLEGSDTKRTVHEFINDQRDRFLLEYALSTKRNTIKKFEKDIAMRERQLKKAEKKLQDDALAFEEFLRENDQRSVDALKLAAQETINKLQMTAELKKASMEVQAVKSEIAKTEFLLKEYMKYGFFLLQLSPKHWQIQQALKRAQASKSKANIILPKILARLSLHSSKKEGILEEFGGTAILSEDASRERDSQGKPSRILTRTSEKIKSNLTESFGSEDSLEFLLDDEMDFDLEPALYFKEPEELLQVLRELEEQNLTLFQYSQDVDENLEEVNKREKVIQDKTNSNIEFLLEQEEMLKANCVREEEKAAELQLRSRLFSFGEFNSDAQEILIDSLSKKITEVYKVCIGDAEDDGLNPIQKLVKVESRLVELCDLIESIPRENVEAIERMKQKERRQKFRDEKMREKQRHQEERLKAALEKAVAQPKKKLGRRLVYHSKPPSANKQQLPLVNETKTKAQEEEYFFT</sequence>
<keyword id="KW-0025">Alternative splicing</keyword>
<keyword id="KW-0966">Cell projection</keyword>
<keyword id="KW-0969">Cilium</keyword>
<keyword id="KW-0175">Coiled coil</keyword>
<keyword id="KW-0963">Cytoplasm</keyword>
<keyword id="KW-0206">Cytoskeleton</keyword>
<keyword id="KW-0221">Differentiation</keyword>
<keyword id="KW-0282">Flagellum</keyword>
<keyword id="KW-1185">Reference proteome</keyword>
<keyword id="KW-0744">Spermatogenesis</keyword>
<protein>
    <recommendedName>
        <fullName>Coiled-coil domain-containing protein 38</fullName>
    </recommendedName>
</protein>
<gene>
    <name type="primary">CCDC38</name>
    <name type="ORF">QtsA-14402</name>
    <name type="ORF">QtsA-15696</name>
</gene>
<proteinExistence type="evidence at transcript level"/>